<gene>
    <name evidence="1" type="primary">smpB</name>
    <name type="ordered locus">RoseRS_0189</name>
</gene>
<sequence>MARGNDIERVVADNRKARHDYFIEETYEAGIALTGSEIKSIRAGQVNLRGGYVRIVDGEAWLYDVHIAPYEQSGAYFNHEPTRPRKLLLHRREISRIAGQVERQGYTLVPLRLYLRGRRAKVEIGLARGKKLYDKRDDIARREARRDIERALKERTRR</sequence>
<keyword id="KW-0963">Cytoplasm</keyword>
<keyword id="KW-0694">RNA-binding</keyword>
<evidence type="ECO:0000255" key="1">
    <source>
        <dbReference type="HAMAP-Rule" id="MF_00023"/>
    </source>
</evidence>
<comment type="function">
    <text evidence="1">Required for rescue of stalled ribosomes mediated by trans-translation. Binds to transfer-messenger RNA (tmRNA), required for stable association of tmRNA with ribosomes. tmRNA and SmpB together mimic tRNA shape, replacing the anticodon stem-loop with SmpB. tmRNA is encoded by the ssrA gene; the 2 termini fold to resemble tRNA(Ala) and it encodes a 'tag peptide', a short internal open reading frame. During trans-translation Ala-aminoacylated tmRNA acts like a tRNA, entering the A-site of stalled ribosomes, displacing the stalled mRNA. The ribosome then switches to translate the ORF on the tmRNA; the nascent peptide is terminated with the 'tag peptide' encoded by the tmRNA and targeted for degradation. The ribosome is freed to recommence translation, which seems to be the essential function of trans-translation.</text>
</comment>
<comment type="subcellular location">
    <subcellularLocation>
        <location evidence="1">Cytoplasm</location>
    </subcellularLocation>
    <text evidence="1">The tmRNA-SmpB complex associates with stalled 70S ribosomes.</text>
</comment>
<comment type="similarity">
    <text evidence="1">Belongs to the SmpB family.</text>
</comment>
<feature type="chain" id="PRO_1000002132" description="SsrA-binding protein">
    <location>
        <begin position="1"/>
        <end position="158"/>
    </location>
</feature>
<accession>A5UPS2</accession>
<reference key="1">
    <citation type="submission" date="2007-04" db="EMBL/GenBank/DDBJ databases">
        <title>Complete sequence of Roseiflexus sp. RS-1.</title>
        <authorList>
            <consortium name="US DOE Joint Genome Institute"/>
            <person name="Copeland A."/>
            <person name="Lucas S."/>
            <person name="Lapidus A."/>
            <person name="Barry K."/>
            <person name="Detter J.C."/>
            <person name="Glavina del Rio T."/>
            <person name="Hammon N."/>
            <person name="Israni S."/>
            <person name="Dalin E."/>
            <person name="Tice H."/>
            <person name="Pitluck S."/>
            <person name="Chertkov O."/>
            <person name="Brettin T."/>
            <person name="Bruce D."/>
            <person name="Han C."/>
            <person name="Schmutz J."/>
            <person name="Larimer F."/>
            <person name="Land M."/>
            <person name="Hauser L."/>
            <person name="Kyrpides N."/>
            <person name="Mikhailova N."/>
            <person name="Bryant D.A."/>
            <person name="Richardson P."/>
        </authorList>
    </citation>
    <scope>NUCLEOTIDE SEQUENCE [LARGE SCALE GENOMIC DNA]</scope>
    <source>
        <strain>RS-1</strain>
    </source>
</reference>
<protein>
    <recommendedName>
        <fullName evidence="1">SsrA-binding protein</fullName>
    </recommendedName>
    <alternativeName>
        <fullName evidence="1">Small protein B</fullName>
    </alternativeName>
</protein>
<proteinExistence type="inferred from homology"/>
<name>SSRP_ROSS1</name>
<organism>
    <name type="scientific">Roseiflexus sp. (strain RS-1)</name>
    <dbReference type="NCBI Taxonomy" id="357808"/>
    <lineage>
        <taxon>Bacteria</taxon>
        <taxon>Bacillati</taxon>
        <taxon>Chloroflexota</taxon>
        <taxon>Chloroflexia</taxon>
        <taxon>Chloroflexales</taxon>
        <taxon>Roseiflexineae</taxon>
        <taxon>Roseiflexaceae</taxon>
        <taxon>Roseiflexus</taxon>
    </lineage>
</organism>
<dbReference type="EMBL" id="CP000686">
    <property type="protein sequence ID" value="ABQ88625.1"/>
    <property type="molecule type" value="Genomic_DNA"/>
</dbReference>
<dbReference type="RefSeq" id="WP_011954984.1">
    <property type="nucleotide sequence ID" value="NC_009523.1"/>
</dbReference>
<dbReference type="SMR" id="A5UPS2"/>
<dbReference type="STRING" id="357808.RoseRS_0189"/>
<dbReference type="KEGG" id="rrs:RoseRS_0189"/>
<dbReference type="eggNOG" id="COG0691">
    <property type="taxonomic scope" value="Bacteria"/>
</dbReference>
<dbReference type="HOGENOM" id="CLU_108953_0_0_0"/>
<dbReference type="OrthoDB" id="9805462at2"/>
<dbReference type="Proteomes" id="UP000006554">
    <property type="component" value="Chromosome"/>
</dbReference>
<dbReference type="GO" id="GO:0005829">
    <property type="term" value="C:cytosol"/>
    <property type="evidence" value="ECO:0007669"/>
    <property type="project" value="TreeGrafter"/>
</dbReference>
<dbReference type="GO" id="GO:0003723">
    <property type="term" value="F:RNA binding"/>
    <property type="evidence" value="ECO:0007669"/>
    <property type="project" value="UniProtKB-UniRule"/>
</dbReference>
<dbReference type="GO" id="GO:0070929">
    <property type="term" value="P:trans-translation"/>
    <property type="evidence" value="ECO:0007669"/>
    <property type="project" value="UniProtKB-UniRule"/>
</dbReference>
<dbReference type="CDD" id="cd09294">
    <property type="entry name" value="SmpB"/>
    <property type="match status" value="1"/>
</dbReference>
<dbReference type="Gene3D" id="2.40.280.10">
    <property type="match status" value="1"/>
</dbReference>
<dbReference type="HAMAP" id="MF_00023">
    <property type="entry name" value="SmpB"/>
    <property type="match status" value="1"/>
</dbReference>
<dbReference type="InterPro" id="IPR023620">
    <property type="entry name" value="SmpB"/>
</dbReference>
<dbReference type="InterPro" id="IPR000037">
    <property type="entry name" value="SsrA-bd_prot"/>
</dbReference>
<dbReference type="InterPro" id="IPR020081">
    <property type="entry name" value="SsrA-bd_prot_CS"/>
</dbReference>
<dbReference type="NCBIfam" id="NF003843">
    <property type="entry name" value="PRK05422.1"/>
    <property type="match status" value="1"/>
</dbReference>
<dbReference type="NCBIfam" id="TIGR00086">
    <property type="entry name" value="smpB"/>
    <property type="match status" value="1"/>
</dbReference>
<dbReference type="PANTHER" id="PTHR30308:SF2">
    <property type="entry name" value="SSRA-BINDING PROTEIN"/>
    <property type="match status" value="1"/>
</dbReference>
<dbReference type="PANTHER" id="PTHR30308">
    <property type="entry name" value="TMRNA-BINDING COMPONENT OF TRANS-TRANSLATION TAGGING COMPLEX"/>
    <property type="match status" value="1"/>
</dbReference>
<dbReference type="Pfam" id="PF01668">
    <property type="entry name" value="SmpB"/>
    <property type="match status" value="1"/>
</dbReference>
<dbReference type="SUPFAM" id="SSF74982">
    <property type="entry name" value="Small protein B (SmpB)"/>
    <property type="match status" value="1"/>
</dbReference>
<dbReference type="PROSITE" id="PS01317">
    <property type="entry name" value="SSRP"/>
    <property type="match status" value="1"/>
</dbReference>